<gene>
    <name evidence="1" type="primary">rpsK</name>
    <name type="ordered locus">BT_2703</name>
</gene>
<accession>Q8A4A0</accession>
<sequence>MAKKTVAAKKRNVKVDANGQLHVHSSFNNIIVSLANSEGQIISWSSAGKMGFRGSKKNTPYAAQMAAQDCAKIAFDLGLRKVKAYVKGPGNGRESAIRTIHGAGIEVTEIIDVTPLPHNGCRPPKRRRV</sequence>
<reference key="1">
    <citation type="journal article" date="2003" name="Science">
        <title>A genomic view of the human-Bacteroides thetaiotaomicron symbiosis.</title>
        <authorList>
            <person name="Xu J."/>
            <person name="Bjursell M.K."/>
            <person name="Himrod J."/>
            <person name="Deng S."/>
            <person name="Carmichael L.K."/>
            <person name="Chiang H.C."/>
            <person name="Hooper L.V."/>
            <person name="Gordon J.I."/>
        </authorList>
    </citation>
    <scope>NUCLEOTIDE SEQUENCE [LARGE SCALE GENOMIC DNA]</scope>
    <source>
        <strain>ATCC 29148 / DSM 2079 / JCM 5827 / CCUG 10774 / NCTC 10582 / VPI-5482 / E50</strain>
    </source>
</reference>
<evidence type="ECO:0000255" key="1">
    <source>
        <dbReference type="HAMAP-Rule" id="MF_01310"/>
    </source>
</evidence>
<evidence type="ECO:0000305" key="2"/>
<keyword id="KW-1185">Reference proteome</keyword>
<keyword id="KW-0687">Ribonucleoprotein</keyword>
<keyword id="KW-0689">Ribosomal protein</keyword>
<keyword id="KW-0694">RNA-binding</keyword>
<keyword id="KW-0699">rRNA-binding</keyword>
<proteinExistence type="inferred from homology"/>
<protein>
    <recommendedName>
        <fullName evidence="1">Small ribosomal subunit protein uS11</fullName>
    </recommendedName>
    <alternativeName>
        <fullName evidence="2">30S ribosomal protein S11</fullName>
    </alternativeName>
</protein>
<dbReference type="EMBL" id="AE015928">
    <property type="protein sequence ID" value="AAO77809.1"/>
    <property type="molecule type" value="Genomic_DNA"/>
</dbReference>
<dbReference type="RefSeq" id="NP_811615.1">
    <property type="nucleotide sequence ID" value="NC_004663.1"/>
</dbReference>
<dbReference type="RefSeq" id="WP_004296327.1">
    <property type="nucleotide sequence ID" value="NZ_UYXG01000001.1"/>
</dbReference>
<dbReference type="SMR" id="Q8A4A0"/>
<dbReference type="FunCoup" id="Q8A4A0">
    <property type="interactions" value="562"/>
</dbReference>
<dbReference type="STRING" id="226186.BT_2703"/>
<dbReference type="PaxDb" id="226186-BT_2703"/>
<dbReference type="EnsemblBacteria" id="AAO77809">
    <property type="protein sequence ID" value="AAO77809"/>
    <property type="gene ID" value="BT_2703"/>
</dbReference>
<dbReference type="GeneID" id="93105299"/>
<dbReference type="KEGG" id="bth:BT_2703"/>
<dbReference type="PATRIC" id="fig|226186.12.peg.2745"/>
<dbReference type="eggNOG" id="COG0100">
    <property type="taxonomic scope" value="Bacteria"/>
</dbReference>
<dbReference type="HOGENOM" id="CLU_072439_5_0_10"/>
<dbReference type="InParanoid" id="Q8A4A0"/>
<dbReference type="OrthoDB" id="9806415at2"/>
<dbReference type="Proteomes" id="UP000001414">
    <property type="component" value="Chromosome"/>
</dbReference>
<dbReference type="GO" id="GO:0022627">
    <property type="term" value="C:cytosolic small ribosomal subunit"/>
    <property type="evidence" value="ECO:0000318"/>
    <property type="project" value="GO_Central"/>
</dbReference>
<dbReference type="GO" id="GO:0019843">
    <property type="term" value="F:rRNA binding"/>
    <property type="evidence" value="ECO:0007669"/>
    <property type="project" value="UniProtKB-UniRule"/>
</dbReference>
<dbReference type="GO" id="GO:0003735">
    <property type="term" value="F:structural constituent of ribosome"/>
    <property type="evidence" value="ECO:0000318"/>
    <property type="project" value="GO_Central"/>
</dbReference>
<dbReference type="GO" id="GO:0006412">
    <property type="term" value="P:translation"/>
    <property type="evidence" value="ECO:0000318"/>
    <property type="project" value="GO_Central"/>
</dbReference>
<dbReference type="FunFam" id="3.30.420.80:FF:000004">
    <property type="entry name" value="30S ribosomal protein S11"/>
    <property type="match status" value="1"/>
</dbReference>
<dbReference type="Gene3D" id="3.30.420.80">
    <property type="entry name" value="Ribosomal protein S11"/>
    <property type="match status" value="1"/>
</dbReference>
<dbReference type="HAMAP" id="MF_01310">
    <property type="entry name" value="Ribosomal_uS11"/>
    <property type="match status" value="1"/>
</dbReference>
<dbReference type="InterPro" id="IPR001971">
    <property type="entry name" value="Ribosomal_uS11"/>
</dbReference>
<dbReference type="InterPro" id="IPR019981">
    <property type="entry name" value="Ribosomal_uS11_bac-type"/>
</dbReference>
<dbReference type="InterPro" id="IPR018102">
    <property type="entry name" value="Ribosomal_uS11_CS"/>
</dbReference>
<dbReference type="InterPro" id="IPR036967">
    <property type="entry name" value="Ribosomal_uS11_sf"/>
</dbReference>
<dbReference type="NCBIfam" id="NF003698">
    <property type="entry name" value="PRK05309.1"/>
    <property type="match status" value="1"/>
</dbReference>
<dbReference type="NCBIfam" id="TIGR03632">
    <property type="entry name" value="uS11_bact"/>
    <property type="match status" value="1"/>
</dbReference>
<dbReference type="PANTHER" id="PTHR11759">
    <property type="entry name" value="40S RIBOSOMAL PROTEIN S14/30S RIBOSOMAL PROTEIN S11"/>
    <property type="match status" value="1"/>
</dbReference>
<dbReference type="Pfam" id="PF00411">
    <property type="entry name" value="Ribosomal_S11"/>
    <property type="match status" value="1"/>
</dbReference>
<dbReference type="PIRSF" id="PIRSF002131">
    <property type="entry name" value="Ribosomal_S11"/>
    <property type="match status" value="1"/>
</dbReference>
<dbReference type="SUPFAM" id="SSF53137">
    <property type="entry name" value="Translational machinery components"/>
    <property type="match status" value="1"/>
</dbReference>
<dbReference type="PROSITE" id="PS00054">
    <property type="entry name" value="RIBOSOMAL_S11"/>
    <property type="match status" value="1"/>
</dbReference>
<organism>
    <name type="scientific">Bacteroides thetaiotaomicron (strain ATCC 29148 / DSM 2079 / JCM 5827 / CCUG 10774 / NCTC 10582 / VPI-5482 / E50)</name>
    <dbReference type="NCBI Taxonomy" id="226186"/>
    <lineage>
        <taxon>Bacteria</taxon>
        <taxon>Pseudomonadati</taxon>
        <taxon>Bacteroidota</taxon>
        <taxon>Bacteroidia</taxon>
        <taxon>Bacteroidales</taxon>
        <taxon>Bacteroidaceae</taxon>
        <taxon>Bacteroides</taxon>
    </lineage>
</organism>
<feature type="chain" id="PRO_0000123107" description="Small ribosomal subunit protein uS11">
    <location>
        <begin position="1"/>
        <end position="129"/>
    </location>
</feature>
<comment type="function">
    <text evidence="1">Located on the platform of the 30S subunit, it bridges several disparate RNA helices of the 16S rRNA. Forms part of the Shine-Dalgarno cleft in the 70S ribosome.</text>
</comment>
<comment type="subunit">
    <text evidence="1">Part of the 30S ribosomal subunit. Interacts with proteins S7 and S18. Binds to IF-3.</text>
</comment>
<comment type="similarity">
    <text evidence="1">Belongs to the universal ribosomal protein uS11 family.</text>
</comment>
<name>RS11_BACTN</name>